<name>RS20_BORGP</name>
<organism>
    <name type="scientific">Borrelia garinii subsp. bavariensis (strain ATCC BAA-2496 / DSM 23469 / PBi)</name>
    <name type="common">Borreliella bavariensis</name>
    <dbReference type="NCBI Taxonomy" id="290434"/>
    <lineage>
        <taxon>Bacteria</taxon>
        <taxon>Pseudomonadati</taxon>
        <taxon>Spirochaetota</taxon>
        <taxon>Spirochaetia</taxon>
        <taxon>Spirochaetales</taxon>
        <taxon>Borreliaceae</taxon>
        <taxon>Borreliella</taxon>
    </lineage>
</organism>
<evidence type="ECO:0000255" key="1">
    <source>
        <dbReference type="HAMAP-Rule" id="MF_00500"/>
    </source>
</evidence>
<evidence type="ECO:0000305" key="2"/>
<dbReference type="EMBL" id="CP000013">
    <property type="protein sequence ID" value="AAU07090.1"/>
    <property type="molecule type" value="Genomic_DNA"/>
</dbReference>
<dbReference type="RefSeq" id="WP_011193574.1">
    <property type="nucleotide sequence ID" value="NC_006156.1"/>
</dbReference>
<dbReference type="SMR" id="Q662D1"/>
<dbReference type="GeneID" id="45161026"/>
<dbReference type="KEGG" id="bga:BG0236"/>
<dbReference type="eggNOG" id="COG0268">
    <property type="taxonomic scope" value="Bacteria"/>
</dbReference>
<dbReference type="HOGENOM" id="CLU_160655_4_0_12"/>
<dbReference type="OrthoDB" id="9808392at2"/>
<dbReference type="Proteomes" id="UP000002276">
    <property type="component" value="Chromosome"/>
</dbReference>
<dbReference type="GO" id="GO:0005829">
    <property type="term" value="C:cytosol"/>
    <property type="evidence" value="ECO:0007669"/>
    <property type="project" value="TreeGrafter"/>
</dbReference>
<dbReference type="GO" id="GO:0015935">
    <property type="term" value="C:small ribosomal subunit"/>
    <property type="evidence" value="ECO:0007669"/>
    <property type="project" value="TreeGrafter"/>
</dbReference>
<dbReference type="GO" id="GO:0070181">
    <property type="term" value="F:small ribosomal subunit rRNA binding"/>
    <property type="evidence" value="ECO:0007669"/>
    <property type="project" value="TreeGrafter"/>
</dbReference>
<dbReference type="GO" id="GO:0003735">
    <property type="term" value="F:structural constituent of ribosome"/>
    <property type="evidence" value="ECO:0007669"/>
    <property type="project" value="InterPro"/>
</dbReference>
<dbReference type="GO" id="GO:0006412">
    <property type="term" value="P:translation"/>
    <property type="evidence" value="ECO:0007669"/>
    <property type="project" value="UniProtKB-UniRule"/>
</dbReference>
<dbReference type="Gene3D" id="1.20.58.110">
    <property type="entry name" value="Ribosomal protein S20"/>
    <property type="match status" value="1"/>
</dbReference>
<dbReference type="HAMAP" id="MF_00500">
    <property type="entry name" value="Ribosomal_bS20"/>
    <property type="match status" value="1"/>
</dbReference>
<dbReference type="InterPro" id="IPR002583">
    <property type="entry name" value="Ribosomal_bS20"/>
</dbReference>
<dbReference type="InterPro" id="IPR036510">
    <property type="entry name" value="Ribosomal_bS20_sf"/>
</dbReference>
<dbReference type="NCBIfam" id="TIGR00029">
    <property type="entry name" value="S20"/>
    <property type="match status" value="1"/>
</dbReference>
<dbReference type="PANTHER" id="PTHR33398">
    <property type="entry name" value="30S RIBOSOMAL PROTEIN S20"/>
    <property type="match status" value="1"/>
</dbReference>
<dbReference type="PANTHER" id="PTHR33398:SF1">
    <property type="entry name" value="SMALL RIBOSOMAL SUBUNIT PROTEIN BS20C"/>
    <property type="match status" value="1"/>
</dbReference>
<dbReference type="Pfam" id="PF01649">
    <property type="entry name" value="Ribosomal_S20p"/>
    <property type="match status" value="1"/>
</dbReference>
<dbReference type="SUPFAM" id="SSF46992">
    <property type="entry name" value="Ribosomal protein S20"/>
    <property type="match status" value="1"/>
</dbReference>
<sequence>MRKNASALKRSRQNLKRKIRNVSVESELKTIEKRCINMIKAGRKDEAIEFFKFVAKKLDTAARKRIIHKNKAARKKSRLNILLLK</sequence>
<reference key="1">
    <citation type="journal article" date="2004" name="Nucleic Acids Res.">
        <title>Comparative analysis of the Borrelia garinii genome.</title>
        <authorList>
            <person name="Gloeckner G."/>
            <person name="Lehmann R."/>
            <person name="Romualdi A."/>
            <person name="Pradella S."/>
            <person name="Schulte-Spechtel U."/>
            <person name="Schilhabel M."/>
            <person name="Wilske B."/>
            <person name="Suehnel J."/>
            <person name="Platzer M."/>
        </authorList>
    </citation>
    <scope>NUCLEOTIDE SEQUENCE [LARGE SCALE GENOMIC DNA]</scope>
    <source>
        <strain>ATCC BAA-2496 / DSM 23469 / PBi</strain>
    </source>
</reference>
<gene>
    <name evidence="1" type="primary">rpsT</name>
    <name type="ordered locus">BG0236</name>
</gene>
<comment type="function">
    <text evidence="1">Binds directly to 16S ribosomal RNA.</text>
</comment>
<comment type="similarity">
    <text evidence="1">Belongs to the bacterial ribosomal protein bS20 family.</text>
</comment>
<accession>Q662D1</accession>
<feature type="chain" id="PRO_0000167928" description="Small ribosomal subunit protein bS20">
    <location>
        <begin position="1"/>
        <end position="85"/>
    </location>
</feature>
<protein>
    <recommendedName>
        <fullName evidence="1">Small ribosomal subunit protein bS20</fullName>
    </recommendedName>
    <alternativeName>
        <fullName evidence="2">30S ribosomal protein S20</fullName>
    </alternativeName>
</protein>
<keyword id="KW-0687">Ribonucleoprotein</keyword>
<keyword id="KW-0689">Ribosomal protein</keyword>
<keyword id="KW-0694">RNA-binding</keyword>
<keyword id="KW-0699">rRNA-binding</keyword>
<proteinExistence type="inferred from homology"/>